<reference key="1">
    <citation type="journal article" date="2001" name="Science">
        <title>Mechanisms of evolution in Rickettsia conorii and R. prowazekii.</title>
        <authorList>
            <person name="Ogata H."/>
            <person name="Audic S."/>
            <person name="Renesto-Audiffren P."/>
            <person name="Fournier P.-E."/>
            <person name="Barbe V."/>
            <person name="Samson D."/>
            <person name="Roux V."/>
            <person name="Cossart P."/>
            <person name="Weissenbach J."/>
            <person name="Claverie J.-M."/>
            <person name="Raoult D."/>
        </authorList>
    </citation>
    <scope>NUCLEOTIDE SEQUENCE [LARGE SCALE GENOMIC DNA]</scope>
    <source>
        <strain>ATCC VR-613 / Malish 7</strain>
    </source>
</reference>
<organism>
    <name type="scientific">Rickettsia conorii (strain ATCC VR-613 / Malish 7)</name>
    <dbReference type="NCBI Taxonomy" id="272944"/>
    <lineage>
        <taxon>Bacteria</taxon>
        <taxon>Pseudomonadati</taxon>
        <taxon>Pseudomonadota</taxon>
        <taxon>Alphaproteobacteria</taxon>
        <taxon>Rickettsiales</taxon>
        <taxon>Rickettsiaceae</taxon>
        <taxon>Rickettsieae</taxon>
        <taxon>Rickettsia</taxon>
        <taxon>spotted fever group</taxon>
    </lineage>
</organism>
<dbReference type="EC" id="3.6.4.-" evidence="1"/>
<dbReference type="EMBL" id="AE006914">
    <property type="protein sequence ID" value="AAL03071.1"/>
    <property type="status" value="ALT_INIT"/>
    <property type="molecule type" value="Genomic_DNA"/>
</dbReference>
<dbReference type="PIR" id="E97766">
    <property type="entry name" value="E97766"/>
</dbReference>
<dbReference type="RefSeq" id="WP_041471719.1">
    <property type="nucleotide sequence ID" value="NC_003103.1"/>
</dbReference>
<dbReference type="SMR" id="Q92I87"/>
<dbReference type="GeneID" id="927653"/>
<dbReference type="KEGG" id="rco:RC0533"/>
<dbReference type="PATRIC" id="fig|272944.4.peg.611"/>
<dbReference type="HOGENOM" id="CLU_055599_1_0_5"/>
<dbReference type="Proteomes" id="UP000000816">
    <property type="component" value="Chromosome"/>
</dbReference>
<dbReference type="GO" id="GO:0005737">
    <property type="term" value="C:cytoplasm"/>
    <property type="evidence" value="ECO:0007669"/>
    <property type="project" value="UniProtKB-SubCell"/>
</dbReference>
<dbReference type="GO" id="GO:0048476">
    <property type="term" value="C:Holliday junction resolvase complex"/>
    <property type="evidence" value="ECO:0007669"/>
    <property type="project" value="UniProtKB-UniRule"/>
</dbReference>
<dbReference type="GO" id="GO:0005524">
    <property type="term" value="F:ATP binding"/>
    <property type="evidence" value="ECO:0007669"/>
    <property type="project" value="UniProtKB-UniRule"/>
</dbReference>
<dbReference type="GO" id="GO:0016887">
    <property type="term" value="F:ATP hydrolysis activity"/>
    <property type="evidence" value="ECO:0007669"/>
    <property type="project" value="InterPro"/>
</dbReference>
<dbReference type="GO" id="GO:0000400">
    <property type="term" value="F:four-way junction DNA binding"/>
    <property type="evidence" value="ECO:0007669"/>
    <property type="project" value="UniProtKB-UniRule"/>
</dbReference>
<dbReference type="GO" id="GO:0009378">
    <property type="term" value="F:four-way junction helicase activity"/>
    <property type="evidence" value="ECO:0007669"/>
    <property type="project" value="InterPro"/>
</dbReference>
<dbReference type="GO" id="GO:0006310">
    <property type="term" value="P:DNA recombination"/>
    <property type="evidence" value="ECO:0007669"/>
    <property type="project" value="UniProtKB-UniRule"/>
</dbReference>
<dbReference type="GO" id="GO:0006281">
    <property type="term" value="P:DNA repair"/>
    <property type="evidence" value="ECO:0007669"/>
    <property type="project" value="UniProtKB-UniRule"/>
</dbReference>
<dbReference type="CDD" id="cd00009">
    <property type="entry name" value="AAA"/>
    <property type="match status" value="1"/>
</dbReference>
<dbReference type="Gene3D" id="1.10.8.60">
    <property type="match status" value="1"/>
</dbReference>
<dbReference type="Gene3D" id="3.40.50.300">
    <property type="entry name" value="P-loop containing nucleotide triphosphate hydrolases"/>
    <property type="match status" value="1"/>
</dbReference>
<dbReference type="Gene3D" id="1.10.10.10">
    <property type="entry name" value="Winged helix-like DNA-binding domain superfamily/Winged helix DNA-binding domain"/>
    <property type="match status" value="1"/>
</dbReference>
<dbReference type="HAMAP" id="MF_00016">
    <property type="entry name" value="DNA_HJ_migration_RuvB"/>
    <property type="match status" value="1"/>
</dbReference>
<dbReference type="InterPro" id="IPR003593">
    <property type="entry name" value="AAA+_ATPase"/>
</dbReference>
<dbReference type="InterPro" id="IPR041445">
    <property type="entry name" value="AAA_lid_4"/>
</dbReference>
<dbReference type="InterPro" id="IPR004605">
    <property type="entry name" value="DNA_helicase_Holl-junc_RuvB"/>
</dbReference>
<dbReference type="InterPro" id="IPR027417">
    <property type="entry name" value="P-loop_NTPase"/>
</dbReference>
<dbReference type="InterPro" id="IPR008824">
    <property type="entry name" value="RuvB-like_N"/>
</dbReference>
<dbReference type="InterPro" id="IPR008823">
    <property type="entry name" value="RuvB_C"/>
</dbReference>
<dbReference type="InterPro" id="IPR036388">
    <property type="entry name" value="WH-like_DNA-bd_sf"/>
</dbReference>
<dbReference type="InterPro" id="IPR036390">
    <property type="entry name" value="WH_DNA-bd_sf"/>
</dbReference>
<dbReference type="NCBIfam" id="NF000868">
    <property type="entry name" value="PRK00080.1"/>
    <property type="match status" value="1"/>
</dbReference>
<dbReference type="NCBIfam" id="TIGR00635">
    <property type="entry name" value="ruvB"/>
    <property type="match status" value="1"/>
</dbReference>
<dbReference type="PANTHER" id="PTHR42848">
    <property type="match status" value="1"/>
</dbReference>
<dbReference type="PANTHER" id="PTHR42848:SF1">
    <property type="entry name" value="HOLLIDAY JUNCTION BRANCH MIGRATION COMPLEX SUBUNIT RUVB"/>
    <property type="match status" value="1"/>
</dbReference>
<dbReference type="Pfam" id="PF17864">
    <property type="entry name" value="AAA_lid_4"/>
    <property type="match status" value="1"/>
</dbReference>
<dbReference type="Pfam" id="PF05491">
    <property type="entry name" value="RuvB_C"/>
    <property type="match status" value="1"/>
</dbReference>
<dbReference type="Pfam" id="PF05496">
    <property type="entry name" value="RuvB_N"/>
    <property type="match status" value="1"/>
</dbReference>
<dbReference type="SMART" id="SM00382">
    <property type="entry name" value="AAA"/>
    <property type="match status" value="1"/>
</dbReference>
<dbReference type="SUPFAM" id="SSF52540">
    <property type="entry name" value="P-loop containing nucleoside triphosphate hydrolases"/>
    <property type="match status" value="1"/>
</dbReference>
<dbReference type="SUPFAM" id="SSF46785">
    <property type="entry name" value="Winged helix' DNA-binding domain"/>
    <property type="match status" value="1"/>
</dbReference>
<protein>
    <recommendedName>
        <fullName evidence="1">Holliday junction branch migration complex subunit RuvB</fullName>
        <ecNumber evidence="1">3.6.4.-</ecNumber>
    </recommendedName>
</protein>
<proteinExistence type="inferred from homology"/>
<keyword id="KW-0067">ATP-binding</keyword>
<keyword id="KW-0963">Cytoplasm</keyword>
<keyword id="KW-0227">DNA damage</keyword>
<keyword id="KW-0233">DNA recombination</keyword>
<keyword id="KW-0234">DNA repair</keyword>
<keyword id="KW-0238">DNA-binding</keyword>
<keyword id="KW-0378">Hydrolase</keyword>
<keyword id="KW-0547">Nucleotide-binding</keyword>
<gene>
    <name evidence="1" type="primary">ruvB</name>
    <name type="ordered locus">RC0533</name>
</gene>
<feature type="chain" id="PRO_0000165587" description="Holliday junction branch migration complex subunit RuvB">
    <location>
        <begin position="1"/>
        <end position="342"/>
    </location>
</feature>
<feature type="region of interest" description="Large ATPase domain (RuvB-L)" evidence="1">
    <location>
        <begin position="1"/>
        <end position="179"/>
    </location>
</feature>
<feature type="region of interest" description="Small ATPAse domain (RuvB-S)" evidence="1">
    <location>
        <begin position="180"/>
        <end position="250"/>
    </location>
</feature>
<feature type="region of interest" description="Head domain (RuvB-H)" evidence="1">
    <location>
        <begin position="253"/>
        <end position="342"/>
    </location>
</feature>
<feature type="binding site" evidence="1">
    <location>
        <position position="18"/>
    </location>
    <ligand>
        <name>ATP</name>
        <dbReference type="ChEBI" id="CHEBI:30616"/>
    </ligand>
</feature>
<feature type="binding site" evidence="1">
    <location>
        <position position="19"/>
    </location>
    <ligand>
        <name>ATP</name>
        <dbReference type="ChEBI" id="CHEBI:30616"/>
    </ligand>
</feature>
<feature type="binding site" evidence="1">
    <location>
        <position position="60"/>
    </location>
    <ligand>
        <name>ATP</name>
        <dbReference type="ChEBI" id="CHEBI:30616"/>
    </ligand>
</feature>
<feature type="binding site" evidence="1">
    <location>
        <position position="63"/>
    </location>
    <ligand>
        <name>ATP</name>
        <dbReference type="ChEBI" id="CHEBI:30616"/>
    </ligand>
</feature>
<feature type="binding site" evidence="1">
    <location>
        <position position="64"/>
    </location>
    <ligand>
        <name>ATP</name>
        <dbReference type="ChEBI" id="CHEBI:30616"/>
    </ligand>
</feature>
<feature type="binding site" evidence="1">
    <location>
        <position position="64"/>
    </location>
    <ligand>
        <name>Mg(2+)</name>
        <dbReference type="ChEBI" id="CHEBI:18420"/>
    </ligand>
</feature>
<feature type="binding site" evidence="1">
    <location>
        <position position="65"/>
    </location>
    <ligand>
        <name>ATP</name>
        <dbReference type="ChEBI" id="CHEBI:30616"/>
    </ligand>
</feature>
<feature type="binding site" evidence="1">
    <location>
        <begin position="126"/>
        <end position="128"/>
    </location>
    <ligand>
        <name>ATP</name>
        <dbReference type="ChEBI" id="CHEBI:30616"/>
    </ligand>
</feature>
<feature type="binding site" evidence="1">
    <location>
        <position position="169"/>
    </location>
    <ligand>
        <name>ATP</name>
        <dbReference type="ChEBI" id="CHEBI:30616"/>
    </ligand>
</feature>
<feature type="binding site" evidence="1">
    <location>
        <position position="179"/>
    </location>
    <ligand>
        <name>ATP</name>
        <dbReference type="ChEBI" id="CHEBI:30616"/>
    </ligand>
</feature>
<feature type="binding site" evidence="1">
    <location>
        <position position="216"/>
    </location>
    <ligand>
        <name>ATP</name>
        <dbReference type="ChEBI" id="CHEBI:30616"/>
    </ligand>
</feature>
<feature type="binding site" evidence="1">
    <location>
        <position position="289"/>
    </location>
    <ligand>
        <name>DNA</name>
        <dbReference type="ChEBI" id="CHEBI:16991"/>
    </ligand>
</feature>
<feature type="binding site" evidence="1">
    <location>
        <position position="308"/>
    </location>
    <ligand>
        <name>DNA</name>
        <dbReference type="ChEBI" id="CHEBI:16991"/>
    </ligand>
</feature>
<feature type="binding site" evidence="1">
    <location>
        <position position="313"/>
    </location>
    <ligand>
        <name>DNA</name>
        <dbReference type="ChEBI" id="CHEBI:16991"/>
    </ligand>
</feature>
<sequence>MTNILSPEKSENDQELPIRPSYLQEFVGQQQIKENLSVFIKAAKSRNEHLDHTLFYGPPGLGKTTLAKIISNEIGGNFKSTSGPAILKVADLAAILTNLEKNDVLFIDEIHRLNTAVEEVLYPAMEDFELDIIIGEGSAARSVKITLPKFTLIGATTRLGLLSNPLRDRFGIPMRLNFYNTGELKKVLNRASKLLDIDLTDSGSEEIAKRSRGTPRIALRLLRRIRDFAAVDGKSRVDKEISDFGLNRLEVDRIGLDSNDYRYLKFIADNYNGGPVGIETIAAALSEQRDALEETIEPYLIQIGLLQRTPRGRVITIAAFEHLKMPVPNQSHHQFNIFNENE</sequence>
<comment type="function">
    <text evidence="1">The RuvA-RuvB-RuvC complex processes Holliday junction (HJ) DNA during genetic recombination and DNA repair, while the RuvA-RuvB complex plays an important role in the rescue of blocked DNA replication forks via replication fork reversal (RFR). RuvA specifically binds to HJ cruciform DNA, conferring on it an open structure. The RuvB hexamer acts as an ATP-dependent pump, pulling dsDNA into and through the RuvAB complex. RuvB forms 2 homohexamers on either side of HJ DNA bound by 1 or 2 RuvA tetramers; 4 subunits per hexamer contact DNA at a time. Coordinated motions by a converter formed by DNA-disengaged RuvB subunits stimulates ATP hydrolysis and nucleotide exchange. Immobilization of the converter enables RuvB to convert the ATP-contained energy into a lever motion, pulling 2 nucleotides of DNA out of the RuvA tetramer per ATP hydrolyzed, thus driving DNA branch migration. The RuvB motors rotate together with the DNA substrate, which together with the progressing nucleotide cycle form the mechanistic basis for DNA recombination by continuous HJ branch migration. Branch migration allows RuvC to scan DNA until it finds its consensus sequence, where it cleaves and resolves cruciform DNA.</text>
</comment>
<comment type="catalytic activity">
    <reaction evidence="1">
        <text>ATP + H2O = ADP + phosphate + H(+)</text>
        <dbReference type="Rhea" id="RHEA:13065"/>
        <dbReference type="ChEBI" id="CHEBI:15377"/>
        <dbReference type="ChEBI" id="CHEBI:15378"/>
        <dbReference type="ChEBI" id="CHEBI:30616"/>
        <dbReference type="ChEBI" id="CHEBI:43474"/>
        <dbReference type="ChEBI" id="CHEBI:456216"/>
    </reaction>
</comment>
<comment type="subunit">
    <text evidence="1">Homohexamer. Forms an RuvA(8)-RuvB(12)-Holliday junction (HJ) complex. HJ DNA is sandwiched between 2 RuvA tetramers; dsDNA enters through RuvA and exits via RuvB. An RuvB hexamer assembles on each DNA strand where it exits the tetramer. Each RuvB hexamer is contacted by two RuvA subunits (via domain III) on 2 adjacent RuvB subunits; this complex drives branch migration. In the full resolvosome a probable DNA-RuvA(4)-RuvB(12)-RuvC(2) complex forms which resolves the HJ.</text>
</comment>
<comment type="subcellular location">
    <subcellularLocation>
        <location evidence="1">Cytoplasm</location>
    </subcellularLocation>
</comment>
<comment type="domain">
    <text evidence="1">Has 3 domains, the large (RuvB-L) and small ATPase (RuvB-S) domains and the C-terminal head (RuvB-H) domain. The head domain binds DNA, while the ATPase domains jointly bind ATP, ADP or are empty depending on the state of the subunit in the translocation cycle. During a single DNA translocation step the structure of each domain remains the same, but their relative positions change.</text>
</comment>
<comment type="similarity">
    <text evidence="1">Belongs to the RuvB family.</text>
</comment>
<comment type="sequence caution" evidence="2">
    <conflict type="erroneous initiation">
        <sequence resource="EMBL-CDS" id="AAL03071"/>
    </conflict>
</comment>
<accession>Q92I87</accession>
<name>RUVB_RICCN</name>
<evidence type="ECO:0000255" key="1">
    <source>
        <dbReference type="HAMAP-Rule" id="MF_00016"/>
    </source>
</evidence>
<evidence type="ECO:0000305" key="2"/>